<protein>
    <recommendedName>
        <fullName evidence="1">UvrABC system protein C</fullName>
        <shortName evidence="1">Protein UvrC</shortName>
    </recommendedName>
    <alternativeName>
        <fullName evidence="1">Excinuclease ABC subunit C</fullName>
    </alternativeName>
</protein>
<proteinExistence type="inferred from homology"/>
<reference key="1">
    <citation type="journal article" date="1998" name="Science">
        <title>Genome sequence of an obligate intracellular pathogen of humans: Chlamydia trachomatis.</title>
        <authorList>
            <person name="Stephens R.S."/>
            <person name="Kalman S."/>
            <person name="Lammel C.J."/>
            <person name="Fan J."/>
            <person name="Marathe R."/>
            <person name="Aravind L."/>
            <person name="Mitchell W.P."/>
            <person name="Olinger L."/>
            <person name="Tatusov R.L."/>
            <person name="Zhao Q."/>
            <person name="Koonin E.V."/>
            <person name="Davis R.W."/>
        </authorList>
    </citation>
    <scope>NUCLEOTIDE SEQUENCE [LARGE SCALE GENOMIC DNA]</scope>
    <source>
        <strain>ATCC VR-885 / DSM 19411 / UW-3/Cx</strain>
    </source>
</reference>
<evidence type="ECO:0000255" key="1">
    <source>
        <dbReference type="HAMAP-Rule" id="MF_00203"/>
    </source>
</evidence>
<accession>O84796</accession>
<comment type="function">
    <text evidence="1">The UvrABC repair system catalyzes the recognition and processing of DNA lesions. UvrC both incises the 5' and 3' sides of the lesion. The N-terminal half is responsible for the 3' incision and the C-terminal half is responsible for the 5' incision.</text>
</comment>
<comment type="subunit">
    <text evidence="1">Interacts with UvrB in an incision complex.</text>
</comment>
<comment type="subcellular location">
    <subcellularLocation>
        <location evidence="1">Cytoplasm</location>
    </subcellularLocation>
</comment>
<comment type="similarity">
    <text evidence="1">Belongs to the UvrC family.</text>
</comment>
<gene>
    <name evidence="1" type="primary">uvrC</name>
    <name type="ordered locus">CT_791</name>
</gene>
<keyword id="KW-0963">Cytoplasm</keyword>
<keyword id="KW-0227">DNA damage</keyword>
<keyword id="KW-0228">DNA excision</keyword>
<keyword id="KW-0234">DNA repair</keyword>
<keyword id="KW-0267">Excision nuclease</keyword>
<keyword id="KW-1185">Reference proteome</keyword>
<keyword id="KW-0742">SOS response</keyword>
<dbReference type="EMBL" id="AE001273">
    <property type="protein sequence ID" value="AAC68386.1"/>
    <property type="molecule type" value="Genomic_DNA"/>
</dbReference>
<dbReference type="PIR" id="C71471">
    <property type="entry name" value="C71471"/>
</dbReference>
<dbReference type="RefSeq" id="NP_220310.1">
    <property type="nucleotide sequence ID" value="NC_000117.1"/>
</dbReference>
<dbReference type="RefSeq" id="WP_010725346.1">
    <property type="nucleotide sequence ID" value="NC_000117.1"/>
</dbReference>
<dbReference type="SMR" id="O84796"/>
<dbReference type="FunCoup" id="O84796">
    <property type="interactions" value="177"/>
</dbReference>
<dbReference type="STRING" id="272561.CT_791"/>
<dbReference type="EnsemblBacteria" id="AAC68386">
    <property type="protein sequence ID" value="AAC68386"/>
    <property type="gene ID" value="CT_791"/>
</dbReference>
<dbReference type="GeneID" id="884594"/>
<dbReference type="KEGG" id="ctr:CT_791"/>
<dbReference type="PATRIC" id="fig|272561.5.peg.870"/>
<dbReference type="HOGENOM" id="CLU_014841_3_2_0"/>
<dbReference type="InParanoid" id="O84796"/>
<dbReference type="OrthoDB" id="9804933at2"/>
<dbReference type="Proteomes" id="UP000000431">
    <property type="component" value="Chromosome"/>
</dbReference>
<dbReference type="GO" id="GO:0005737">
    <property type="term" value="C:cytoplasm"/>
    <property type="evidence" value="ECO:0007669"/>
    <property type="project" value="UniProtKB-SubCell"/>
</dbReference>
<dbReference type="GO" id="GO:0009380">
    <property type="term" value="C:excinuclease repair complex"/>
    <property type="evidence" value="ECO:0000318"/>
    <property type="project" value="GO_Central"/>
</dbReference>
<dbReference type="GO" id="GO:0003677">
    <property type="term" value="F:DNA binding"/>
    <property type="evidence" value="ECO:0007669"/>
    <property type="project" value="UniProtKB-UniRule"/>
</dbReference>
<dbReference type="GO" id="GO:0009381">
    <property type="term" value="F:excinuclease ABC activity"/>
    <property type="evidence" value="ECO:0007669"/>
    <property type="project" value="UniProtKB-UniRule"/>
</dbReference>
<dbReference type="GO" id="GO:0006974">
    <property type="term" value="P:DNA damage response"/>
    <property type="evidence" value="ECO:0000318"/>
    <property type="project" value="GO_Central"/>
</dbReference>
<dbReference type="GO" id="GO:0006289">
    <property type="term" value="P:nucleotide-excision repair"/>
    <property type="evidence" value="ECO:0007669"/>
    <property type="project" value="UniProtKB-UniRule"/>
</dbReference>
<dbReference type="GO" id="GO:0009432">
    <property type="term" value="P:SOS response"/>
    <property type="evidence" value="ECO:0007669"/>
    <property type="project" value="UniProtKB-UniRule"/>
</dbReference>
<dbReference type="CDD" id="cd10434">
    <property type="entry name" value="GIY-YIG_UvrC_Cho"/>
    <property type="match status" value="1"/>
</dbReference>
<dbReference type="FunFam" id="3.40.1440.10:FF:000001">
    <property type="entry name" value="UvrABC system protein C"/>
    <property type="match status" value="1"/>
</dbReference>
<dbReference type="Gene3D" id="1.10.150.20">
    <property type="entry name" value="5' to 3' exonuclease, C-terminal subdomain"/>
    <property type="match status" value="1"/>
</dbReference>
<dbReference type="Gene3D" id="3.40.1440.10">
    <property type="entry name" value="GIY-YIG endonuclease"/>
    <property type="match status" value="1"/>
</dbReference>
<dbReference type="Gene3D" id="3.30.420.340">
    <property type="entry name" value="UvrC, RNAse H endonuclease domain"/>
    <property type="match status" value="1"/>
</dbReference>
<dbReference type="HAMAP" id="MF_00203">
    <property type="entry name" value="UvrC"/>
    <property type="match status" value="1"/>
</dbReference>
<dbReference type="InterPro" id="IPR000305">
    <property type="entry name" value="GIY-YIG_endonuc"/>
</dbReference>
<dbReference type="InterPro" id="IPR035901">
    <property type="entry name" value="GIY-YIG_endonuc_sf"/>
</dbReference>
<dbReference type="InterPro" id="IPR047296">
    <property type="entry name" value="GIY-YIG_UvrC_Cho"/>
</dbReference>
<dbReference type="InterPro" id="IPR010994">
    <property type="entry name" value="RuvA_2-like"/>
</dbReference>
<dbReference type="InterPro" id="IPR001943">
    <property type="entry name" value="UVR_dom"/>
</dbReference>
<dbReference type="InterPro" id="IPR036876">
    <property type="entry name" value="UVR_dom_sf"/>
</dbReference>
<dbReference type="InterPro" id="IPR050066">
    <property type="entry name" value="UvrABC_protein_C"/>
</dbReference>
<dbReference type="InterPro" id="IPR004791">
    <property type="entry name" value="UvrC"/>
</dbReference>
<dbReference type="InterPro" id="IPR001162">
    <property type="entry name" value="UvrC_RNase_H_dom"/>
</dbReference>
<dbReference type="InterPro" id="IPR038476">
    <property type="entry name" value="UvrC_RNase_H_dom_sf"/>
</dbReference>
<dbReference type="NCBIfam" id="TIGR00194">
    <property type="entry name" value="uvrC"/>
    <property type="match status" value="1"/>
</dbReference>
<dbReference type="PANTHER" id="PTHR30562:SF1">
    <property type="entry name" value="UVRABC SYSTEM PROTEIN C"/>
    <property type="match status" value="1"/>
</dbReference>
<dbReference type="PANTHER" id="PTHR30562">
    <property type="entry name" value="UVRC/OXIDOREDUCTASE"/>
    <property type="match status" value="1"/>
</dbReference>
<dbReference type="Pfam" id="PF01541">
    <property type="entry name" value="GIY-YIG"/>
    <property type="match status" value="1"/>
</dbReference>
<dbReference type="Pfam" id="PF14520">
    <property type="entry name" value="HHH_5"/>
    <property type="match status" value="1"/>
</dbReference>
<dbReference type="Pfam" id="PF22920">
    <property type="entry name" value="UvrC_RNaseH"/>
    <property type="match status" value="1"/>
</dbReference>
<dbReference type="Pfam" id="PF08459">
    <property type="entry name" value="UvrC_RNaseH_dom"/>
    <property type="match status" value="1"/>
</dbReference>
<dbReference type="SMART" id="SM00465">
    <property type="entry name" value="GIYc"/>
    <property type="match status" value="1"/>
</dbReference>
<dbReference type="SUPFAM" id="SSF46600">
    <property type="entry name" value="C-terminal UvrC-binding domain of UvrB"/>
    <property type="match status" value="1"/>
</dbReference>
<dbReference type="SUPFAM" id="SSF82771">
    <property type="entry name" value="GIY-YIG endonuclease"/>
    <property type="match status" value="1"/>
</dbReference>
<dbReference type="SUPFAM" id="SSF47781">
    <property type="entry name" value="RuvA domain 2-like"/>
    <property type="match status" value="1"/>
</dbReference>
<dbReference type="PROSITE" id="PS50164">
    <property type="entry name" value="GIY_YIG"/>
    <property type="match status" value="1"/>
</dbReference>
<dbReference type="PROSITE" id="PS50151">
    <property type="entry name" value="UVR"/>
    <property type="match status" value="1"/>
</dbReference>
<dbReference type="PROSITE" id="PS50165">
    <property type="entry name" value="UVRC"/>
    <property type="match status" value="1"/>
</dbReference>
<sequence>MRIEDFSLKDVSSSPGVYLMKDSQGTVLYVGKAKNLRNRLSSYLQKKGDSRKRIPFLMKKTTDIDTIVVSNETEAILLENNLIKKYQPRYNVLLKDDKTFFCLSVSLEHPWPRIEAIRTRALSPGKKKQWLFGPYVSAEACYALLEVISLWFPLRTCSDREFSTRQRPCVLYEMKRCLAPCVGLCSQTEYQETLDKAVLFLKGDVRSTISNLEKAIEKASQEQKFEHAAALYRTLTLIRQTMAKQHVEKFQAYDIDVLGLYRKGSLAIVSVLSVYSGKLLGARYFIFPENAQEDSALFSSFILQYYAENPRIPKEIFVPVSLDSPELPYLLNTAEPPKIRCPKTEYGKELLALAHKNAAEQAKPFNSITPPYEELQHFFNLSQYPYRIECYDNAHLQGEHNVGVCIVFENGLFSPKQYRTFSITSHGDDLAAFEEVLTRRFRSLTTELPNLIVIDGGRNQFKRAQRILEELNLTGITVVTIAKESGNHSKSLRQEKLFCETFPQGILLHPTSAILQFFQLLRDEAHRFAIQHYRKKHAKAVLTTKKIPGIGEVKTKRLLQKFKSWKRVFIASEEELKTVQGITAKDIQRIQEEGAKPE</sequence>
<name>UVRC_CHLTR</name>
<organism>
    <name type="scientific">Chlamydia trachomatis serovar D (strain ATCC VR-885 / DSM 19411 / UW-3/Cx)</name>
    <dbReference type="NCBI Taxonomy" id="272561"/>
    <lineage>
        <taxon>Bacteria</taxon>
        <taxon>Pseudomonadati</taxon>
        <taxon>Chlamydiota</taxon>
        <taxon>Chlamydiia</taxon>
        <taxon>Chlamydiales</taxon>
        <taxon>Chlamydiaceae</taxon>
        <taxon>Chlamydia/Chlamydophila group</taxon>
        <taxon>Chlamydia</taxon>
    </lineage>
</organism>
<feature type="chain" id="PRO_0000138296" description="UvrABC system protein C">
    <location>
        <begin position="1"/>
        <end position="598"/>
    </location>
</feature>
<feature type="domain" description="GIY-YIG" evidence="1">
    <location>
        <begin position="13"/>
        <end position="92"/>
    </location>
</feature>
<feature type="domain" description="UVR" evidence="1">
    <location>
        <begin position="206"/>
        <end position="241"/>
    </location>
</feature>